<accession>A8M1L0</accession>
<gene>
    <name evidence="1" type="primary">tig</name>
    <name type="ordered locus">Sare_3879</name>
</gene>
<name>TIG_SALAI</name>
<evidence type="ECO:0000255" key="1">
    <source>
        <dbReference type="HAMAP-Rule" id="MF_00303"/>
    </source>
</evidence>
<feature type="chain" id="PRO_1000079053" description="Trigger factor">
    <location>
        <begin position="1"/>
        <end position="448"/>
    </location>
</feature>
<feature type="domain" description="PPIase FKBP-type" evidence="1">
    <location>
        <begin position="162"/>
        <end position="243"/>
    </location>
</feature>
<comment type="function">
    <text evidence="1">Involved in protein export. Acts as a chaperone by maintaining the newly synthesized protein in an open conformation. Functions as a peptidyl-prolyl cis-trans isomerase.</text>
</comment>
<comment type="catalytic activity">
    <reaction evidence="1">
        <text>[protein]-peptidylproline (omega=180) = [protein]-peptidylproline (omega=0)</text>
        <dbReference type="Rhea" id="RHEA:16237"/>
        <dbReference type="Rhea" id="RHEA-COMP:10747"/>
        <dbReference type="Rhea" id="RHEA-COMP:10748"/>
        <dbReference type="ChEBI" id="CHEBI:83833"/>
        <dbReference type="ChEBI" id="CHEBI:83834"/>
        <dbReference type="EC" id="5.2.1.8"/>
    </reaction>
</comment>
<comment type="subcellular location">
    <subcellularLocation>
        <location>Cytoplasm</location>
    </subcellularLocation>
    <text evidence="1">About half TF is bound to the ribosome near the polypeptide exit tunnel while the other half is free in the cytoplasm.</text>
</comment>
<comment type="domain">
    <text evidence="1">Consists of 3 domains; the N-terminus binds the ribosome, the middle domain has PPIase activity, while the C-terminus has intrinsic chaperone activity on its own.</text>
</comment>
<comment type="similarity">
    <text evidence="1">Belongs to the FKBP-type PPIase family. Tig subfamily.</text>
</comment>
<sequence length="448" mass="48849">MKSTVETLSPTRVRLAIEVPFVELEPSLKKAYREIGQQVQVPGFRRGKVPAVVIDQRVGRGTVLNEAVQEAIPQNILAAVREHDLKTLGRPEVEITEFTDGDSLNFTAEVDVRPELTLPDLSTVEVTVDELKIDDSEIDEQVQSLRERFATLKTVDRAAGEGDFVQIDLNATVDGEEVPGGSASNLSHEVGSKQLLPGLDEAVVGLAAGASTTFTTQLVGGDHAGRDAEVSVTVRTVKEKELPELDDEFAELASEFDTMAELRDDVRERVTRGKRVEQIYAARDKALEQIVEAADVPAPEGVVREEVESRKTAMVDQLERIGASMEEYLAAEEKTEEQIDTELNEAAVQGVKIQLLLDTVADAEDVQVSDDEFGHEIVHRAQRAGVAPQQFYDQLVRSGAAGAVYGDVRRGKALASIMDRITIRDAAGEPVSLDALRAENEAEHAHAE</sequence>
<reference key="1">
    <citation type="submission" date="2007-10" db="EMBL/GenBank/DDBJ databases">
        <title>Complete sequence of Salinispora arenicola CNS-205.</title>
        <authorList>
            <consortium name="US DOE Joint Genome Institute"/>
            <person name="Copeland A."/>
            <person name="Lucas S."/>
            <person name="Lapidus A."/>
            <person name="Barry K."/>
            <person name="Glavina del Rio T."/>
            <person name="Dalin E."/>
            <person name="Tice H."/>
            <person name="Pitluck S."/>
            <person name="Foster B."/>
            <person name="Schmutz J."/>
            <person name="Larimer F."/>
            <person name="Land M."/>
            <person name="Hauser L."/>
            <person name="Kyrpides N."/>
            <person name="Ivanova N."/>
            <person name="Jensen P.R."/>
            <person name="Moore B.S."/>
            <person name="Penn K."/>
            <person name="Jenkins C."/>
            <person name="Udwary D."/>
            <person name="Xiang L."/>
            <person name="Gontang E."/>
            <person name="Richardson P."/>
        </authorList>
    </citation>
    <scope>NUCLEOTIDE SEQUENCE [LARGE SCALE GENOMIC DNA]</scope>
    <source>
        <strain>CNS-205</strain>
    </source>
</reference>
<organism>
    <name type="scientific">Salinispora arenicola (strain CNS-205)</name>
    <dbReference type="NCBI Taxonomy" id="391037"/>
    <lineage>
        <taxon>Bacteria</taxon>
        <taxon>Bacillati</taxon>
        <taxon>Actinomycetota</taxon>
        <taxon>Actinomycetes</taxon>
        <taxon>Micromonosporales</taxon>
        <taxon>Micromonosporaceae</taxon>
        <taxon>Salinispora</taxon>
    </lineage>
</organism>
<proteinExistence type="inferred from homology"/>
<protein>
    <recommendedName>
        <fullName evidence="1">Trigger factor</fullName>
        <shortName evidence="1">TF</shortName>
        <ecNumber evidence="1">5.2.1.8</ecNumber>
    </recommendedName>
    <alternativeName>
        <fullName evidence="1">PPIase</fullName>
    </alternativeName>
</protein>
<dbReference type="EC" id="5.2.1.8" evidence="1"/>
<dbReference type="EMBL" id="CP000850">
    <property type="protein sequence ID" value="ABV99671.1"/>
    <property type="molecule type" value="Genomic_DNA"/>
</dbReference>
<dbReference type="SMR" id="A8M1L0"/>
<dbReference type="STRING" id="391037.Sare_3879"/>
<dbReference type="KEGG" id="saq:Sare_3879"/>
<dbReference type="PATRIC" id="fig|391037.6.peg.3911"/>
<dbReference type="eggNOG" id="COG0544">
    <property type="taxonomic scope" value="Bacteria"/>
</dbReference>
<dbReference type="HOGENOM" id="CLU_033058_3_0_11"/>
<dbReference type="OrthoDB" id="9767721at2"/>
<dbReference type="GO" id="GO:0005737">
    <property type="term" value="C:cytoplasm"/>
    <property type="evidence" value="ECO:0007669"/>
    <property type="project" value="UniProtKB-SubCell"/>
</dbReference>
<dbReference type="GO" id="GO:0003755">
    <property type="term" value="F:peptidyl-prolyl cis-trans isomerase activity"/>
    <property type="evidence" value="ECO:0007669"/>
    <property type="project" value="UniProtKB-UniRule"/>
</dbReference>
<dbReference type="GO" id="GO:0044183">
    <property type="term" value="F:protein folding chaperone"/>
    <property type="evidence" value="ECO:0007669"/>
    <property type="project" value="TreeGrafter"/>
</dbReference>
<dbReference type="GO" id="GO:0043022">
    <property type="term" value="F:ribosome binding"/>
    <property type="evidence" value="ECO:0007669"/>
    <property type="project" value="TreeGrafter"/>
</dbReference>
<dbReference type="GO" id="GO:0051083">
    <property type="term" value="P:'de novo' cotranslational protein folding"/>
    <property type="evidence" value="ECO:0007669"/>
    <property type="project" value="TreeGrafter"/>
</dbReference>
<dbReference type="GO" id="GO:0051301">
    <property type="term" value="P:cell division"/>
    <property type="evidence" value="ECO:0007669"/>
    <property type="project" value="UniProtKB-KW"/>
</dbReference>
<dbReference type="GO" id="GO:0061077">
    <property type="term" value="P:chaperone-mediated protein folding"/>
    <property type="evidence" value="ECO:0007669"/>
    <property type="project" value="TreeGrafter"/>
</dbReference>
<dbReference type="GO" id="GO:0015031">
    <property type="term" value="P:protein transport"/>
    <property type="evidence" value="ECO:0007669"/>
    <property type="project" value="UniProtKB-UniRule"/>
</dbReference>
<dbReference type="GO" id="GO:0043335">
    <property type="term" value="P:protein unfolding"/>
    <property type="evidence" value="ECO:0007669"/>
    <property type="project" value="TreeGrafter"/>
</dbReference>
<dbReference type="Gene3D" id="3.10.50.40">
    <property type="match status" value="1"/>
</dbReference>
<dbReference type="Gene3D" id="3.30.70.1050">
    <property type="entry name" value="Trigger factor ribosome-binding domain"/>
    <property type="match status" value="1"/>
</dbReference>
<dbReference type="Gene3D" id="1.10.3120.10">
    <property type="entry name" value="Trigger factor, C-terminal domain"/>
    <property type="match status" value="1"/>
</dbReference>
<dbReference type="HAMAP" id="MF_00303">
    <property type="entry name" value="Trigger_factor_Tig"/>
    <property type="match status" value="1"/>
</dbReference>
<dbReference type="InterPro" id="IPR046357">
    <property type="entry name" value="PPIase_dom_sf"/>
</dbReference>
<dbReference type="InterPro" id="IPR001179">
    <property type="entry name" value="PPIase_FKBP_dom"/>
</dbReference>
<dbReference type="InterPro" id="IPR005215">
    <property type="entry name" value="Trig_fac"/>
</dbReference>
<dbReference type="InterPro" id="IPR008880">
    <property type="entry name" value="Trigger_fac_C"/>
</dbReference>
<dbReference type="InterPro" id="IPR037041">
    <property type="entry name" value="Trigger_fac_C_sf"/>
</dbReference>
<dbReference type="InterPro" id="IPR008881">
    <property type="entry name" value="Trigger_fac_ribosome-bd_bac"/>
</dbReference>
<dbReference type="InterPro" id="IPR036611">
    <property type="entry name" value="Trigger_fac_ribosome-bd_sf"/>
</dbReference>
<dbReference type="InterPro" id="IPR027304">
    <property type="entry name" value="Trigger_fact/SurA_dom_sf"/>
</dbReference>
<dbReference type="NCBIfam" id="TIGR00115">
    <property type="entry name" value="tig"/>
    <property type="match status" value="1"/>
</dbReference>
<dbReference type="PANTHER" id="PTHR30560">
    <property type="entry name" value="TRIGGER FACTOR CHAPERONE AND PEPTIDYL-PROLYL CIS/TRANS ISOMERASE"/>
    <property type="match status" value="1"/>
</dbReference>
<dbReference type="PANTHER" id="PTHR30560:SF3">
    <property type="entry name" value="TRIGGER FACTOR-LIKE PROTEIN TIG, CHLOROPLASTIC"/>
    <property type="match status" value="1"/>
</dbReference>
<dbReference type="Pfam" id="PF00254">
    <property type="entry name" value="FKBP_C"/>
    <property type="match status" value="1"/>
</dbReference>
<dbReference type="Pfam" id="PF05698">
    <property type="entry name" value="Trigger_C"/>
    <property type="match status" value="1"/>
</dbReference>
<dbReference type="Pfam" id="PF05697">
    <property type="entry name" value="Trigger_N"/>
    <property type="match status" value="1"/>
</dbReference>
<dbReference type="PIRSF" id="PIRSF003095">
    <property type="entry name" value="Trigger_factor"/>
    <property type="match status" value="1"/>
</dbReference>
<dbReference type="SUPFAM" id="SSF54534">
    <property type="entry name" value="FKBP-like"/>
    <property type="match status" value="1"/>
</dbReference>
<dbReference type="SUPFAM" id="SSF109998">
    <property type="entry name" value="Triger factor/SurA peptide-binding domain-like"/>
    <property type="match status" value="1"/>
</dbReference>
<dbReference type="SUPFAM" id="SSF102735">
    <property type="entry name" value="Trigger factor ribosome-binding domain"/>
    <property type="match status" value="1"/>
</dbReference>
<keyword id="KW-0131">Cell cycle</keyword>
<keyword id="KW-0132">Cell division</keyword>
<keyword id="KW-0143">Chaperone</keyword>
<keyword id="KW-0963">Cytoplasm</keyword>
<keyword id="KW-0413">Isomerase</keyword>
<keyword id="KW-0697">Rotamase</keyword>